<dbReference type="EMBL" id="AF488564">
    <property type="protein sequence ID" value="AAM10936.1"/>
    <property type="molecule type" value="mRNA"/>
</dbReference>
<dbReference type="EMBL" id="AC005617">
    <property type="protein sequence ID" value="AAC63588.1"/>
    <property type="status" value="ALT_SEQ"/>
    <property type="molecule type" value="Genomic_DNA"/>
</dbReference>
<dbReference type="EMBL" id="CP002685">
    <property type="protein sequence ID" value="AEC07352.1"/>
    <property type="molecule type" value="Genomic_DNA"/>
</dbReference>
<dbReference type="EMBL" id="AK176248">
    <property type="protein sequence ID" value="BAD44011.1"/>
    <property type="molecule type" value="mRNA"/>
</dbReference>
<dbReference type="PIR" id="F84616">
    <property type="entry name" value="F84616"/>
</dbReference>
<dbReference type="RefSeq" id="NP_850031.2">
    <property type="nucleotide sequence ID" value="NM_179700.3"/>
</dbReference>
<dbReference type="SMR" id="Q8S3F1"/>
<dbReference type="BioGRID" id="2160">
    <property type="interactions" value="8"/>
</dbReference>
<dbReference type="FunCoup" id="Q8S3F1">
    <property type="interactions" value="14"/>
</dbReference>
<dbReference type="IntAct" id="Q8S3F1">
    <property type="interactions" value="5"/>
</dbReference>
<dbReference type="STRING" id="3702.Q8S3F1"/>
<dbReference type="PaxDb" id="3702-AT2G22770.1"/>
<dbReference type="EnsemblPlants" id="AT2G22770.1">
    <property type="protein sequence ID" value="AT2G22770.1"/>
    <property type="gene ID" value="AT2G22770"/>
</dbReference>
<dbReference type="GeneID" id="816807"/>
<dbReference type="Gramene" id="AT2G22770.1">
    <property type="protein sequence ID" value="AT2G22770.1"/>
    <property type="gene ID" value="AT2G22770"/>
</dbReference>
<dbReference type="KEGG" id="ath:AT2G22770"/>
<dbReference type="Araport" id="AT2G22770"/>
<dbReference type="TAIR" id="AT2G22770">
    <property type="gene designation" value="NAI1"/>
</dbReference>
<dbReference type="eggNOG" id="ENOG502QUSQ">
    <property type="taxonomic scope" value="Eukaryota"/>
</dbReference>
<dbReference type="HOGENOM" id="CLU_046481_0_1_1"/>
<dbReference type="InParanoid" id="Q8S3F1"/>
<dbReference type="OMA" id="AQEHIMA"/>
<dbReference type="OrthoDB" id="690068at2759"/>
<dbReference type="PhylomeDB" id="Q8S3F1"/>
<dbReference type="PRO" id="PR:Q8S3F1"/>
<dbReference type="Proteomes" id="UP000006548">
    <property type="component" value="Chromosome 2"/>
</dbReference>
<dbReference type="ExpressionAtlas" id="Q8S3F1">
    <property type="expression patterns" value="baseline and differential"/>
</dbReference>
<dbReference type="GO" id="GO:0005634">
    <property type="term" value="C:nucleus"/>
    <property type="evidence" value="ECO:0007669"/>
    <property type="project" value="UniProtKB-SubCell"/>
</dbReference>
<dbReference type="GO" id="GO:0003677">
    <property type="term" value="F:DNA binding"/>
    <property type="evidence" value="ECO:0007669"/>
    <property type="project" value="UniProtKB-KW"/>
</dbReference>
<dbReference type="GO" id="GO:0003700">
    <property type="term" value="F:DNA-binding transcription factor activity"/>
    <property type="evidence" value="ECO:0000250"/>
    <property type="project" value="TAIR"/>
</dbReference>
<dbReference type="GO" id="GO:0046983">
    <property type="term" value="F:protein dimerization activity"/>
    <property type="evidence" value="ECO:0007669"/>
    <property type="project" value="InterPro"/>
</dbReference>
<dbReference type="GO" id="GO:0007029">
    <property type="term" value="P:endoplasmic reticulum organization"/>
    <property type="evidence" value="ECO:0000315"/>
    <property type="project" value="TAIR"/>
</dbReference>
<dbReference type="GO" id="GO:0006355">
    <property type="term" value="P:regulation of DNA-templated transcription"/>
    <property type="evidence" value="ECO:0000315"/>
    <property type="project" value="TAIR"/>
</dbReference>
<dbReference type="CDD" id="cd11452">
    <property type="entry name" value="bHLH_AtNAI1_like"/>
    <property type="match status" value="1"/>
</dbReference>
<dbReference type="Gene3D" id="4.10.280.10">
    <property type="entry name" value="Helix-loop-helix DNA-binding domain"/>
    <property type="match status" value="1"/>
</dbReference>
<dbReference type="InterPro" id="IPR011598">
    <property type="entry name" value="bHLH_dom"/>
</dbReference>
<dbReference type="InterPro" id="IPR052610">
    <property type="entry name" value="bHLH_transcription_regulator"/>
</dbReference>
<dbReference type="InterPro" id="IPR036638">
    <property type="entry name" value="HLH_DNA-bd_sf"/>
</dbReference>
<dbReference type="PANTHER" id="PTHR45959">
    <property type="entry name" value="BHLH TRANSCRIPTION FACTOR"/>
    <property type="match status" value="1"/>
</dbReference>
<dbReference type="PANTHER" id="PTHR45959:SF52">
    <property type="entry name" value="TRANSCRIPTION FACTOR NAI1"/>
    <property type="match status" value="1"/>
</dbReference>
<dbReference type="Pfam" id="PF00010">
    <property type="entry name" value="HLH"/>
    <property type="match status" value="1"/>
</dbReference>
<dbReference type="SMART" id="SM00353">
    <property type="entry name" value="HLH"/>
    <property type="match status" value="1"/>
</dbReference>
<dbReference type="SUPFAM" id="SSF47459">
    <property type="entry name" value="HLH, helix-loop-helix DNA-binding domain"/>
    <property type="match status" value="1"/>
</dbReference>
<dbReference type="PROSITE" id="PS50888">
    <property type="entry name" value="BHLH"/>
    <property type="match status" value="1"/>
</dbReference>
<accession>Q8S3F1</accession>
<accession>O82398</accession>
<accession>Q67Z70</accession>
<proteinExistence type="evidence at transcript level"/>
<feature type="chain" id="PRO_0000358734" description="Transcription factor NAI1">
    <location>
        <begin position="1"/>
        <end position="320"/>
    </location>
</feature>
<feature type="domain" description="bHLH" evidence="1">
    <location>
        <begin position="128"/>
        <end position="177"/>
    </location>
</feature>
<feature type="region of interest" description="Disordered" evidence="2">
    <location>
        <begin position="53"/>
        <end position="105"/>
    </location>
</feature>
<feature type="compositionally biased region" description="Low complexity" evidence="2">
    <location>
        <begin position="58"/>
        <end position="80"/>
    </location>
</feature>
<feature type="compositionally biased region" description="Polar residues" evidence="2">
    <location>
        <begin position="81"/>
        <end position="105"/>
    </location>
</feature>
<feature type="sequence conflict" description="In Ref. 1; BAD44011." evidence="10" ref="1">
    <original>S</original>
    <variation>C</variation>
    <location>
        <position position="73"/>
    </location>
</feature>
<reference key="1">
    <citation type="journal article" date="2003" name="Mol. Biol. Evol.">
        <title>The basic helix-loop-helix transcription factor family in plants: a genome-wide study of protein structure and functional diversity.</title>
        <authorList>
            <person name="Heim M.A."/>
            <person name="Jakoby M."/>
            <person name="Werber M."/>
            <person name="Martin C."/>
            <person name="Weisshaar B."/>
            <person name="Bailey P.C."/>
        </authorList>
    </citation>
    <scope>NUCLEOTIDE SEQUENCE [MRNA]</scope>
    <scope>TISSUE SPECIFICITY</scope>
    <scope>GENE FAMILY</scope>
    <scope>NOMENCLATURE</scope>
    <source>
        <strain>cv. Columbia</strain>
    </source>
</reference>
<reference key="2">
    <citation type="journal article" date="1999" name="Nature">
        <title>Sequence and analysis of chromosome 2 of the plant Arabidopsis thaliana.</title>
        <authorList>
            <person name="Lin X."/>
            <person name="Kaul S."/>
            <person name="Rounsley S.D."/>
            <person name="Shea T.P."/>
            <person name="Benito M.-I."/>
            <person name="Town C.D."/>
            <person name="Fujii C.Y."/>
            <person name="Mason T.M."/>
            <person name="Bowman C.L."/>
            <person name="Barnstead M.E."/>
            <person name="Feldblyum T.V."/>
            <person name="Buell C.R."/>
            <person name="Ketchum K.A."/>
            <person name="Lee J.J."/>
            <person name="Ronning C.M."/>
            <person name="Koo H.L."/>
            <person name="Moffat K.S."/>
            <person name="Cronin L.A."/>
            <person name="Shen M."/>
            <person name="Pai G."/>
            <person name="Van Aken S."/>
            <person name="Umayam L."/>
            <person name="Tallon L.J."/>
            <person name="Gill J.E."/>
            <person name="Adams M.D."/>
            <person name="Carrera A.J."/>
            <person name="Creasy T.H."/>
            <person name="Goodman H.M."/>
            <person name="Somerville C.R."/>
            <person name="Copenhaver G.P."/>
            <person name="Preuss D."/>
            <person name="Nierman W.C."/>
            <person name="White O."/>
            <person name="Eisen J.A."/>
            <person name="Salzberg S.L."/>
            <person name="Fraser C.M."/>
            <person name="Venter J.C."/>
        </authorList>
    </citation>
    <scope>NUCLEOTIDE SEQUENCE [LARGE SCALE GENOMIC DNA]</scope>
    <source>
        <strain>cv. Columbia</strain>
    </source>
</reference>
<reference key="3">
    <citation type="journal article" date="2017" name="Plant J.">
        <title>Araport11: a complete reannotation of the Arabidopsis thaliana reference genome.</title>
        <authorList>
            <person name="Cheng C.Y."/>
            <person name="Krishnakumar V."/>
            <person name="Chan A.P."/>
            <person name="Thibaud-Nissen F."/>
            <person name="Schobel S."/>
            <person name="Town C.D."/>
        </authorList>
    </citation>
    <scope>GENOME REANNOTATION</scope>
    <source>
        <strain>cv. Columbia</strain>
    </source>
</reference>
<reference key="4">
    <citation type="submission" date="2004-09" db="EMBL/GenBank/DDBJ databases">
        <title>Large-scale analysis of RIKEN Arabidopsis full-length (RAFL) cDNAs.</title>
        <authorList>
            <person name="Totoki Y."/>
            <person name="Seki M."/>
            <person name="Ishida J."/>
            <person name="Nakajima M."/>
            <person name="Enju A."/>
            <person name="Kamiya A."/>
            <person name="Narusaka M."/>
            <person name="Shin-i T."/>
            <person name="Nakagawa M."/>
            <person name="Sakamoto N."/>
            <person name="Oishi K."/>
            <person name="Kohara Y."/>
            <person name="Kobayashi M."/>
            <person name="Toyoda A."/>
            <person name="Sakaki Y."/>
            <person name="Sakurai T."/>
            <person name="Iida K."/>
            <person name="Akiyama K."/>
            <person name="Satou M."/>
            <person name="Toyoda T."/>
            <person name="Konagaya A."/>
            <person name="Carninci P."/>
            <person name="Kawai J."/>
            <person name="Hayashizaki Y."/>
            <person name="Shinozaki K."/>
        </authorList>
    </citation>
    <scope>NUCLEOTIDE SEQUENCE [LARGE SCALE MRNA]</scope>
    <source>
        <strain>cv. Columbia</strain>
    </source>
</reference>
<reference key="5">
    <citation type="journal article" date="2003" name="Plant Cell">
        <title>The Arabidopsis basic/helix-loop-helix transcription factor family.</title>
        <authorList>
            <person name="Toledo-Ortiz G."/>
            <person name="Huq E."/>
            <person name="Quail P.H."/>
        </authorList>
    </citation>
    <scope>GENE FAMILY</scope>
</reference>
<reference key="6">
    <citation type="journal article" date="2003" name="Plant Cell">
        <title>Update on the basic helix-loop-helix transcription factor gene family in Arabidopsis thaliana.</title>
        <authorList>
            <person name="Bailey P.C."/>
            <person name="Martin C."/>
            <person name="Toledo-Ortiz G."/>
            <person name="Quail P.H."/>
            <person name="Huq E."/>
            <person name="Heim M.A."/>
            <person name="Jakoby M."/>
            <person name="Werber M."/>
            <person name="Weisshaar B."/>
        </authorList>
    </citation>
    <scope>GENE FAMILY</scope>
    <scope>NOMENCLATURE</scope>
</reference>
<reference key="7">
    <citation type="journal article" date="2003" name="Plant Cell Physiol.">
        <title>The ER body, a novel endoplasmic reticulum-derived structure in Arabidopsis.</title>
        <authorList>
            <person name="Matsushima R."/>
            <person name="Hayashi Y."/>
            <person name="Yamada K."/>
            <person name="Shimada T."/>
            <person name="Nishimura M."/>
            <person name="Hara-Nishimura I."/>
        </authorList>
    </citation>
    <scope>REVIEW</scope>
</reference>
<reference key="8">
    <citation type="journal article" date="2003" name="Plant J.">
        <title>A novel ER-derived compartment, the ER body, selectively accumulates a beta-glucosidase with an ER-retention signal in Arabidopsis.</title>
        <authorList>
            <person name="Matsushima R."/>
            <person name="Kondo M."/>
            <person name="Nishimura M."/>
            <person name="Hara-Nishimura I."/>
        </authorList>
    </citation>
    <scope>FUNCTION</scope>
</reference>
<reference key="9">
    <citation type="journal article" date="2004" name="Plant Cell">
        <title>NAI1 gene encodes a basic-helix-loop-helix-type putative transcription factor that regulates the formation of an endoplasmic reticulum-derived structure, the ER body.</title>
        <authorList>
            <person name="Matsushima R."/>
            <person name="Fukao Y."/>
            <person name="Nishimura M."/>
            <person name="Hara-Nishimura I."/>
        </authorList>
    </citation>
    <scope>FUNCTION</scope>
</reference>
<reference key="10">
    <citation type="journal article" date="2005" name="Plant Cell Physiol.">
        <title>Activation of an ER-body-localized beta-glucosidase via a cytosolic binding partner in damaged tissues of Arabidopsis thaliana.</title>
        <authorList>
            <person name="Nagano A.J."/>
            <person name="Matsushima R."/>
            <person name="Hara-Nishimura I."/>
        </authorList>
    </citation>
    <scope>FUNCTION</scope>
</reference>
<reference key="11">
    <citation type="journal article" date="2008" name="Plant Cell">
        <title>NAI2 is an endoplasmic reticulum body component that enables ER body formation in Arabidopsis thaliana.</title>
        <authorList>
            <person name="Yamada K."/>
            <person name="Nagano A.J."/>
            <person name="Nishina M."/>
            <person name="Hara-Nishimura I."/>
            <person name="Nishimura M."/>
        </authorList>
    </citation>
    <scope>FUNCTION</scope>
</reference>
<reference key="12">
    <citation type="journal article" date="2008" name="Plant Cell Physiol.">
        <title>Antagonistic jacalin-related lectins regulate the size of ER body-type beta-glucosidase complexes in Arabidopsis thaliana.</title>
        <authorList>
            <person name="Nagano A.J."/>
            <person name="Fukao Y."/>
            <person name="Fujiwara M."/>
            <person name="Nishimura M."/>
            <person name="Hara-Nishimura I."/>
        </authorList>
    </citation>
    <scope>FUNCTION</scope>
</reference>
<reference key="13">
    <citation type="journal article" date="2008" name="Plant J.">
        <title>PYK10, a beta-glucosidase located in the endoplasmatic reticulum, is crucial for the beneficial interaction between Arabidopsis thaliana and the endophytic fungus Piriformospora indica.</title>
        <authorList>
            <person name="Sherameti I."/>
            <person name="Venus Y."/>
            <person name="Drzewiecki C."/>
            <person name="Tripathi S."/>
            <person name="Dan V.M."/>
            <person name="Nitz I."/>
            <person name="Varma A."/>
            <person name="Grundler F.M."/>
            <person name="Oelmueller R."/>
        </authorList>
    </citation>
    <scope>FUNCTION</scope>
</reference>
<gene>
    <name type="primary">NAI1</name>
    <name type="synonym">BHLH20</name>
    <name type="synonym">EN27</name>
    <name type="ordered locus">At2g22770</name>
    <name type="ORF">T30L20.3</name>
</gene>
<name>BH020_ARATH</name>
<comment type="function">
    <text evidence="3 5 6 7 8 9">Transcription activator that regulates the expression of at least NAI2, PYK10 and PBP1. Required for and mediates the formation of endoplasmic reticulum bodies (ER bodies). Involved in the symbiotic interactions with the endophytes of the Sebacinaceae fungus family, such as Piriformospora indica and Sebacina.</text>
</comment>
<comment type="subunit">
    <text evidence="10">Homodimer.</text>
</comment>
<comment type="subcellular location">
    <subcellularLocation>
        <location evidence="1">Nucleus</location>
    </subcellularLocation>
</comment>
<comment type="tissue specificity">
    <text evidence="4">Expressed constitutively in roots, leaves, stems, and flowers.</text>
</comment>
<comment type="sequence caution" evidence="10">
    <conflict type="erroneous gene model prediction">
        <sequence resource="EMBL-CDS" id="AAC63588"/>
    </conflict>
</comment>
<keyword id="KW-0010">Activator</keyword>
<keyword id="KW-0238">DNA-binding</keyword>
<keyword id="KW-0539">Nucleus</keyword>
<keyword id="KW-1185">Reference proteome</keyword>
<keyword id="KW-0804">Transcription</keyword>
<keyword id="KW-0805">Transcription regulation</keyword>
<evidence type="ECO:0000255" key="1">
    <source>
        <dbReference type="PROSITE-ProRule" id="PRU00981"/>
    </source>
</evidence>
<evidence type="ECO:0000256" key="2">
    <source>
        <dbReference type="SAM" id="MobiDB-lite"/>
    </source>
</evidence>
<evidence type="ECO:0000269" key="3">
    <source>
    </source>
</evidence>
<evidence type="ECO:0000269" key="4">
    <source>
    </source>
</evidence>
<evidence type="ECO:0000269" key="5">
    <source>
    </source>
</evidence>
<evidence type="ECO:0000269" key="6">
    <source>
    </source>
</evidence>
<evidence type="ECO:0000269" key="7">
    <source>
    </source>
</evidence>
<evidence type="ECO:0000269" key="8">
    <source>
    </source>
</evidence>
<evidence type="ECO:0000269" key="9">
    <source>
    </source>
</evidence>
<evidence type="ECO:0000305" key="10"/>
<organism>
    <name type="scientific">Arabidopsis thaliana</name>
    <name type="common">Mouse-ear cress</name>
    <dbReference type="NCBI Taxonomy" id="3702"/>
    <lineage>
        <taxon>Eukaryota</taxon>
        <taxon>Viridiplantae</taxon>
        <taxon>Streptophyta</taxon>
        <taxon>Embryophyta</taxon>
        <taxon>Tracheophyta</taxon>
        <taxon>Spermatophyta</taxon>
        <taxon>Magnoliopsida</taxon>
        <taxon>eudicotyledons</taxon>
        <taxon>Gunneridae</taxon>
        <taxon>Pentapetalae</taxon>
        <taxon>rosids</taxon>
        <taxon>malvids</taxon>
        <taxon>Brassicales</taxon>
        <taxon>Brassicaceae</taxon>
        <taxon>Camelineae</taxon>
        <taxon>Arabidopsis</taxon>
    </lineage>
</organism>
<sequence>MDDSSFMDLMIDTDEYLIDDWESDFPICGETNTNPGSESGSGTGFELLAERPTKQMKTNNNMNSTSSSPSSSSSSGSRTSQVISFGSPDTKTNPVETSLNFSNQVSMDQKVGSKRKDCVNNGGRREPHLLKEHVLAERKRRQKLNERLIALSALLPGLKKTDKATVLEDAIKHLKQLQERVKKLEEERVVTKKMDQSIILVKRSQVYLDDDSSSYSSTCSAASPLSSSSDEVSIFKQTMPMIEARVSDRDLLIRVHCEKNKGCMIKILSSLEKFRLEVVNSFTLPFGNSTLVITILTKMDNKFSRPVEEVVKNIRVALAE</sequence>
<protein>
    <recommendedName>
        <fullName>Transcription factor NAI1</fullName>
    </recommendedName>
    <alternativeName>
        <fullName>Basic helix-loop-helix protein 20</fullName>
        <shortName>AtbHLH20</shortName>
        <shortName>bHLH 20</shortName>
    </alternativeName>
    <alternativeName>
        <fullName>Transcription factor EN 27</fullName>
    </alternativeName>
    <alternativeName>
        <fullName>bHLH transcription factor bHLH020</fullName>
    </alternativeName>
</protein>